<reference key="1">
    <citation type="submission" date="2005-11" db="EMBL/GenBank/DDBJ databases">
        <title>The complete genome sequence of Lawsonia intracellularis: the causative agent of proliferative enteropathy.</title>
        <authorList>
            <person name="Kaur K."/>
            <person name="Zhang Q."/>
            <person name="Beckler D."/>
            <person name="Munir S."/>
            <person name="Li L."/>
            <person name="Kinsley K."/>
            <person name="Herron L."/>
            <person name="Peterson A."/>
            <person name="May B."/>
            <person name="Singh S."/>
            <person name="Gebhart C."/>
            <person name="Kapur V."/>
        </authorList>
    </citation>
    <scope>NUCLEOTIDE SEQUENCE [LARGE SCALE GENOMIC DNA]</scope>
    <source>
        <strain>PHE/MN1-00</strain>
    </source>
</reference>
<name>MURE_LAWIP</name>
<feature type="chain" id="PRO_1000012369" description="UDP-N-acetylmuramoyl-L-alanyl-D-glutamate--2,6-diaminopimelate ligase">
    <location>
        <begin position="1"/>
        <end position="482"/>
    </location>
</feature>
<feature type="short sequence motif" description="Meso-diaminopimelate recognition motif">
    <location>
        <begin position="402"/>
        <end position="405"/>
    </location>
</feature>
<feature type="binding site" evidence="1">
    <location>
        <position position="24"/>
    </location>
    <ligand>
        <name>UDP-N-acetyl-alpha-D-muramoyl-L-alanyl-D-glutamate</name>
        <dbReference type="ChEBI" id="CHEBI:83900"/>
    </ligand>
</feature>
<feature type="binding site" evidence="1">
    <location>
        <begin position="105"/>
        <end position="111"/>
    </location>
    <ligand>
        <name>ATP</name>
        <dbReference type="ChEBI" id="CHEBI:30616"/>
    </ligand>
</feature>
<feature type="binding site" evidence="1">
    <location>
        <begin position="147"/>
        <end position="148"/>
    </location>
    <ligand>
        <name>UDP-N-acetyl-alpha-D-muramoyl-L-alanyl-D-glutamate</name>
        <dbReference type="ChEBI" id="CHEBI:83900"/>
    </ligand>
</feature>
<feature type="binding site" evidence="1">
    <location>
        <position position="174"/>
    </location>
    <ligand>
        <name>UDP-N-acetyl-alpha-D-muramoyl-L-alanyl-D-glutamate</name>
        <dbReference type="ChEBI" id="CHEBI:83900"/>
    </ligand>
</feature>
<feature type="binding site" evidence="1">
    <location>
        <position position="180"/>
    </location>
    <ligand>
        <name>UDP-N-acetyl-alpha-D-muramoyl-L-alanyl-D-glutamate</name>
        <dbReference type="ChEBI" id="CHEBI:83900"/>
    </ligand>
</feature>
<feature type="binding site" evidence="1">
    <location>
        <position position="182"/>
    </location>
    <ligand>
        <name>UDP-N-acetyl-alpha-D-muramoyl-L-alanyl-D-glutamate</name>
        <dbReference type="ChEBI" id="CHEBI:83900"/>
    </ligand>
</feature>
<feature type="binding site" evidence="1">
    <location>
        <position position="378"/>
    </location>
    <ligand>
        <name>meso-2,6-diaminopimelate</name>
        <dbReference type="ChEBI" id="CHEBI:57791"/>
    </ligand>
</feature>
<feature type="binding site" evidence="1">
    <location>
        <begin position="402"/>
        <end position="405"/>
    </location>
    <ligand>
        <name>meso-2,6-diaminopimelate</name>
        <dbReference type="ChEBI" id="CHEBI:57791"/>
    </ligand>
</feature>
<feature type="binding site" evidence="1">
    <location>
        <position position="453"/>
    </location>
    <ligand>
        <name>meso-2,6-diaminopimelate</name>
        <dbReference type="ChEBI" id="CHEBI:57791"/>
    </ligand>
</feature>
<feature type="binding site" evidence="1">
    <location>
        <position position="457"/>
    </location>
    <ligand>
        <name>meso-2,6-diaminopimelate</name>
        <dbReference type="ChEBI" id="CHEBI:57791"/>
    </ligand>
</feature>
<feature type="modified residue" description="N6-carboxylysine" evidence="1">
    <location>
        <position position="214"/>
    </location>
</feature>
<accession>Q1MPC4</accession>
<gene>
    <name evidence="1" type="primary">murE</name>
    <name type="ordered locus">LI1099</name>
</gene>
<sequence>MNRYPLKALESELEKKHMLICIDSRKVEKGCVFVALPGSSVDGGLFIPDAVSRGAAYIVCRHNEVEYCGSAIPIVVDDPRYTLGRLARIFYNTGNLSMPIIGVTGTNGKTTITYLLEYLFRAKGNRTGVIGTIAYRWPGFSKEAPLTTPQCLDLHAMLAQMQVDKTEIVFMEVSSHALDQRRIAGISFKGVIFTNLTQDHLDYHKDMKEYFHAKARLFFEYPSKNKIMVASMDNQWGRKLAKLVPEIIGFGFKNKPTQVSNYLFGKILSSSRAGLHLQMSFKDKVWELCTPLVGVHNAENLLAVQAISLQLGLAPEDFCCFEKFTGVPGRLERIVNKKQLDIFVDYAHTPDALINVLSALRDVGFKRIITVFGCGGNRDKAKRPLMGKAVAKLSDVAVLTSDNPRNEDPELIMADVLPGLKKAKQIITEPDREKAIRQAIELVSPGDALLVAGKGHECTQQIGFMKYPFSDQSVIRKILGCD</sequence>
<keyword id="KW-0067">ATP-binding</keyword>
<keyword id="KW-0131">Cell cycle</keyword>
<keyword id="KW-0132">Cell division</keyword>
<keyword id="KW-0133">Cell shape</keyword>
<keyword id="KW-0961">Cell wall biogenesis/degradation</keyword>
<keyword id="KW-0963">Cytoplasm</keyword>
<keyword id="KW-0436">Ligase</keyword>
<keyword id="KW-0460">Magnesium</keyword>
<keyword id="KW-0547">Nucleotide-binding</keyword>
<keyword id="KW-0573">Peptidoglycan synthesis</keyword>
<keyword id="KW-1185">Reference proteome</keyword>
<organism>
    <name type="scientific">Lawsonia intracellularis (strain PHE/MN1-00)</name>
    <dbReference type="NCBI Taxonomy" id="363253"/>
    <lineage>
        <taxon>Bacteria</taxon>
        <taxon>Pseudomonadati</taxon>
        <taxon>Thermodesulfobacteriota</taxon>
        <taxon>Desulfovibrionia</taxon>
        <taxon>Desulfovibrionales</taxon>
        <taxon>Desulfovibrionaceae</taxon>
        <taxon>Lawsonia</taxon>
    </lineage>
</organism>
<dbReference type="EC" id="6.3.2.13" evidence="1"/>
<dbReference type="EMBL" id="AM180252">
    <property type="protein sequence ID" value="CAJ55153.1"/>
    <property type="molecule type" value="Genomic_DNA"/>
</dbReference>
<dbReference type="RefSeq" id="WP_011527182.1">
    <property type="nucleotide sequence ID" value="NC_008011.1"/>
</dbReference>
<dbReference type="SMR" id="Q1MPC4"/>
<dbReference type="STRING" id="363253.LI1099"/>
<dbReference type="KEGG" id="lip:LI1099"/>
<dbReference type="eggNOG" id="COG0769">
    <property type="taxonomic scope" value="Bacteria"/>
</dbReference>
<dbReference type="HOGENOM" id="CLU_022291_4_1_7"/>
<dbReference type="OrthoDB" id="9800958at2"/>
<dbReference type="UniPathway" id="UPA00219"/>
<dbReference type="Proteomes" id="UP000002430">
    <property type="component" value="Chromosome"/>
</dbReference>
<dbReference type="GO" id="GO:0005737">
    <property type="term" value="C:cytoplasm"/>
    <property type="evidence" value="ECO:0007669"/>
    <property type="project" value="UniProtKB-SubCell"/>
</dbReference>
<dbReference type="GO" id="GO:0005524">
    <property type="term" value="F:ATP binding"/>
    <property type="evidence" value="ECO:0007669"/>
    <property type="project" value="UniProtKB-UniRule"/>
</dbReference>
<dbReference type="GO" id="GO:0000287">
    <property type="term" value="F:magnesium ion binding"/>
    <property type="evidence" value="ECO:0007669"/>
    <property type="project" value="UniProtKB-UniRule"/>
</dbReference>
<dbReference type="GO" id="GO:0008765">
    <property type="term" value="F:UDP-N-acetylmuramoylalanyl-D-glutamate-2,6-diaminopimelate ligase activity"/>
    <property type="evidence" value="ECO:0007669"/>
    <property type="project" value="UniProtKB-UniRule"/>
</dbReference>
<dbReference type="GO" id="GO:0051301">
    <property type="term" value="P:cell division"/>
    <property type="evidence" value="ECO:0007669"/>
    <property type="project" value="UniProtKB-KW"/>
</dbReference>
<dbReference type="GO" id="GO:0071555">
    <property type="term" value="P:cell wall organization"/>
    <property type="evidence" value="ECO:0007669"/>
    <property type="project" value="UniProtKB-KW"/>
</dbReference>
<dbReference type="GO" id="GO:0009252">
    <property type="term" value="P:peptidoglycan biosynthetic process"/>
    <property type="evidence" value="ECO:0007669"/>
    <property type="project" value="UniProtKB-UniRule"/>
</dbReference>
<dbReference type="GO" id="GO:0008360">
    <property type="term" value="P:regulation of cell shape"/>
    <property type="evidence" value="ECO:0007669"/>
    <property type="project" value="UniProtKB-KW"/>
</dbReference>
<dbReference type="Gene3D" id="3.90.190.20">
    <property type="entry name" value="Mur ligase, C-terminal domain"/>
    <property type="match status" value="1"/>
</dbReference>
<dbReference type="Gene3D" id="3.40.1190.10">
    <property type="entry name" value="Mur-like, catalytic domain"/>
    <property type="match status" value="1"/>
</dbReference>
<dbReference type="Gene3D" id="3.40.1390.10">
    <property type="entry name" value="MurE/MurF, N-terminal domain"/>
    <property type="match status" value="1"/>
</dbReference>
<dbReference type="HAMAP" id="MF_00208">
    <property type="entry name" value="MurE"/>
    <property type="match status" value="1"/>
</dbReference>
<dbReference type="InterPro" id="IPR036565">
    <property type="entry name" value="Mur-like_cat_sf"/>
</dbReference>
<dbReference type="InterPro" id="IPR004101">
    <property type="entry name" value="Mur_ligase_C"/>
</dbReference>
<dbReference type="InterPro" id="IPR036615">
    <property type="entry name" value="Mur_ligase_C_dom_sf"/>
</dbReference>
<dbReference type="InterPro" id="IPR013221">
    <property type="entry name" value="Mur_ligase_cen"/>
</dbReference>
<dbReference type="InterPro" id="IPR000713">
    <property type="entry name" value="Mur_ligase_N"/>
</dbReference>
<dbReference type="InterPro" id="IPR035911">
    <property type="entry name" value="MurE/MurF_N"/>
</dbReference>
<dbReference type="InterPro" id="IPR005761">
    <property type="entry name" value="UDP-N-AcMur-Glu-dNH2Pim_ligase"/>
</dbReference>
<dbReference type="NCBIfam" id="TIGR01085">
    <property type="entry name" value="murE"/>
    <property type="match status" value="1"/>
</dbReference>
<dbReference type="NCBIfam" id="NF001124">
    <property type="entry name" value="PRK00139.1-2"/>
    <property type="match status" value="1"/>
</dbReference>
<dbReference type="NCBIfam" id="NF001126">
    <property type="entry name" value="PRK00139.1-4"/>
    <property type="match status" value="1"/>
</dbReference>
<dbReference type="PANTHER" id="PTHR23135">
    <property type="entry name" value="MUR LIGASE FAMILY MEMBER"/>
    <property type="match status" value="1"/>
</dbReference>
<dbReference type="PANTHER" id="PTHR23135:SF4">
    <property type="entry name" value="UDP-N-ACETYLMURAMOYL-L-ALANYL-D-GLUTAMATE--2,6-DIAMINOPIMELATE LIGASE MURE HOMOLOG, CHLOROPLASTIC"/>
    <property type="match status" value="1"/>
</dbReference>
<dbReference type="Pfam" id="PF01225">
    <property type="entry name" value="Mur_ligase"/>
    <property type="match status" value="1"/>
</dbReference>
<dbReference type="Pfam" id="PF02875">
    <property type="entry name" value="Mur_ligase_C"/>
    <property type="match status" value="1"/>
</dbReference>
<dbReference type="Pfam" id="PF08245">
    <property type="entry name" value="Mur_ligase_M"/>
    <property type="match status" value="1"/>
</dbReference>
<dbReference type="SUPFAM" id="SSF53623">
    <property type="entry name" value="MurD-like peptide ligases, catalytic domain"/>
    <property type="match status" value="1"/>
</dbReference>
<dbReference type="SUPFAM" id="SSF53244">
    <property type="entry name" value="MurD-like peptide ligases, peptide-binding domain"/>
    <property type="match status" value="1"/>
</dbReference>
<dbReference type="SUPFAM" id="SSF63418">
    <property type="entry name" value="MurE/MurF N-terminal domain"/>
    <property type="match status" value="1"/>
</dbReference>
<proteinExistence type="inferred from homology"/>
<protein>
    <recommendedName>
        <fullName evidence="1">UDP-N-acetylmuramoyl-L-alanyl-D-glutamate--2,6-diaminopimelate ligase</fullName>
        <ecNumber evidence="1">6.3.2.13</ecNumber>
    </recommendedName>
    <alternativeName>
        <fullName evidence="1">Meso-A2pm-adding enzyme</fullName>
    </alternativeName>
    <alternativeName>
        <fullName evidence="1">Meso-diaminopimelate-adding enzyme</fullName>
    </alternativeName>
    <alternativeName>
        <fullName evidence="1">UDP-MurNAc-L-Ala-D-Glu:meso-diaminopimelate ligase</fullName>
    </alternativeName>
    <alternativeName>
        <fullName evidence="1">UDP-MurNAc-tripeptide synthetase</fullName>
    </alternativeName>
    <alternativeName>
        <fullName evidence="1">UDP-N-acetylmuramyl-tripeptide synthetase</fullName>
    </alternativeName>
</protein>
<evidence type="ECO:0000255" key="1">
    <source>
        <dbReference type="HAMAP-Rule" id="MF_00208"/>
    </source>
</evidence>
<comment type="function">
    <text evidence="1">Catalyzes the addition of meso-diaminopimelic acid to the nucleotide precursor UDP-N-acetylmuramoyl-L-alanyl-D-glutamate (UMAG) in the biosynthesis of bacterial cell-wall peptidoglycan.</text>
</comment>
<comment type="catalytic activity">
    <reaction evidence="1">
        <text>UDP-N-acetyl-alpha-D-muramoyl-L-alanyl-D-glutamate + meso-2,6-diaminopimelate + ATP = UDP-N-acetyl-alpha-D-muramoyl-L-alanyl-gamma-D-glutamyl-meso-2,6-diaminopimelate + ADP + phosphate + H(+)</text>
        <dbReference type="Rhea" id="RHEA:23676"/>
        <dbReference type="ChEBI" id="CHEBI:15378"/>
        <dbReference type="ChEBI" id="CHEBI:30616"/>
        <dbReference type="ChEBI" id="CHEBI:43474"/>
        <dbReference type="ChEBI" id="CHEBI:57791"/>
        <dbReference type="ChEBI" id="CHEBI:83900"/>
        <dbReference type="ChEBI" id="CHEBI:83905"/>
        <dbReference type="ChEBI" id="CHEBI:456216"/>
        <dbReference type="EC" id="6.3.2.13"/>
    </reaction>
</comment>
<comment type="cofactor">
    <cofactor evidence="1">
        <name>Mg(2+)</name>
        <dbReference type="ChEBI" id="CHEBI:18420"/>
    </cofactor>
</comment>
<comment type="pathway">
    <text evidence="1">Cell wall biogenesis; peptidoglycan biosynthesis.</text>
</comment>
<comment type="subcellular location">
    <subcellularLocation>
        <location evidence="1">Cytoplasm</location>
    </subcellularLocation>
</comment>
<comment type="PTM">
    <text evidence="1">Carboxylation is probably crucial for Mg(2+) binding and, consequently, for the gamma-phosphate positioning of ATP.</text>
</comment>
<comment type="similarity">
    <text evidence="1">Belongs to the MurCDEF family. MurE subfamily.</text>
</comment>